<accession>A5D2K5</accession>
<evidence type="ECO:0000255" key="1">
    <source>
        <dbReference type="HAMAP-Rule" id="MF_00149"/>
    </source>
</evidence>
<protein>
    <recommendedName>
        <fullName evidence="1">DNA mismatch repair protein MutL</fullName>
    </recommendedName>
</protein>
<reference key="1">
    <citation type="journal article" date="2008" name="Genome Res.">
        <title>The genome of Pelotomaculum thermopropionicum reveals niche-associated evolution in anaerobic microbiota.</title>
        <authorList>
            <person name="Kosaka T."/>
            <person name="Kato S."/>
            <person name="Shimoyama T."/>
            <person name="Ishii S."/>
            <person name="Abe T."/>
            <person name="Watanabe K."/>
        </authorList>
    </citation>
    <scope>NUCLEOTIDE SEQUENCE [LARGE SCALE GENOMIC DNA]</scope>
    <source>
        <strain>DSM 13744 / JCM 10971 / SI</strain>
    </source>
</reference>
<name>MUTL_PELTS</name>
<dbReference type="EMBL" id="AP009389">
    <property type="protein sequence ID" value="BAF59523.1"/>
    <property type="molecule type" value="Genomic_DNA"/>
</dbReference>
<dbReference type="SMR" id="A5D2K5"/>
<dbReference type="STRING" id="370438.PTH_1342"/>
<dbReference type="KEGG" id="pth:PTH_1342"/>
<dbReference type="eggNOG" id="COG0323">
    <property type="taxonomic scope" value="Bacteria"/>
</dbReference>
<dbReference type="HOGENOM" id="CLU_004131_4_1_9"/>
<dbReference type="Proteomes" id="UP000006556">
    <property type="component" value="Chromosome"/>
</dbReference>
<dbReference type="GO" id="GO:0032300">
    <property type="term" value="C:mismatch repair complex"/>
    <property type="evidence" value="ECO:0007669"/>
    <property type="project" value="InterPro"/>
</dbReference>
<dbReference type="GO" id="GO:0005524">
    <property type="term" value="F:ATP binding"/>
    <property type="evidence" value="ECO:0007669"/>
    <property type="project" value="InterPro"/>
</dbReference>
<dbReference type="GO" id="GO:0016887">
    <property type="term" value="F:ATP hydrolysis activity"/>
    <property type="evidence" value="ECO:0007669"/>
    <property type="project" value="InterPro"/>
</dbReference>
<dbReference type="GO" id="GO:0140664">
    <property type="term" value="F:ATP-dependent DNA damage sensor activity"/>
    <property type="evidence" value="ECO:0007669"/>
    <property type="project" value="InterPro"/>
</dbReference>
<dbReference type="GO" id="GO:0030983">
    <property type="term" value="F:mismatched DNA binding"/>
    <property type="evidence" value="ECO:0007669"/>
    <property type="project" value="InterPro"/>
</dbReference>
<dbReference type="GO" id="GO:0006298">
    <property type="term" value="P:mismatch repair"/>
    <property type="evidence" value="ECO:0007669"/>
    <property type="project" value="UniProtKB-UniRule"/>
</dbReference>
<dbReference type="CDD" id="cd16926">
    <property type="entry name" value="HATPase_MutL-MLH-PMS-like"/>
    <property type="match status" value="1"/>
</dbReference>
<dbReference type="CDD" id="cd00782">
    <property type="entry name" value="MutL_Trans"/>
    <property type="match status" value="1"/>
</dbReference>
<dbReference type="FunFam" id="3.30.565.10:FF:000003">
    <property type="entry name" value="DNA mismatch repair endonuclease MutL"/>
    <property type="match status" value="1"/>
</dbReference>
<dbReference type="Gene3D" id="3.30.230.10">
    <property type="match status" value="1"/>
</dbReference>
<dbReference type="Gene3D" id="3.30.565.10">
    <property type="entry name" value="Histidine kinase-like ATPase, C-terminal domain"/>
    <property type="match status" value="1"/>
</dbReference>
<dbReference type="Gene3D" id="3.30.1540.20">
    <property type="entry name" value="MutL, C-terminal domain, dimerisation subdomain"/>
    <property type="match status" value="1"/>
</dbReference>
<dbReference type="Gene3D" id="3.30.1370.100">
    <property type="entry name" value="MutL, C-terminal domain, regulatory subdomain"/>
    <property type="match status" value="1"/>
</dbReference>
<dbReference type="HAMAP" id="MF_00149">
    <property type="entry name" value="DNA_mis_repair"/>
    <property type="match status" value="1"/>
</dbReference>
<dbReference type="InterPro" id="IPR014762">
    <property type="entry name" value="DNA_mismatch_repair_CS"/>
</dbReference>
<dbReference type="InterPro" id="IPR020667">
    <property type="entry name" value="DNA_mismatch_repair_MutL"/>
</dbReference>
<dbReference type="InterPro" id="IPR013507">
    <property type="entry name" value="DNA_mismatch_S5_2-like"/>
</dbReference>
<dbReference type="InterPro" id="IPR036890">
    <property type="entry name" value="HATPase_C_sf"/>
</dbReference>
<dbReference type="InterPro" id="IPR002099">
    <property type="entry name" value="MutL/Mlh/PMS"/>
</dbReference>
<dbReference type="InterPro" id="IPR038973">
    <property type="entry name" value="MutL/Mlh/Pms-like"/>
</dbReference>
<dbReference type="InterPro" id="IPR014790">
    <property type="entry name" value="MutL_C"/>
</dbReference>
<dbReference type="InterPro" id="IPR042120">
    <property type="entry name" value="MutL_C_dimsub"/>
</dbReference>
<dbReference type="InterPro" id="IPR042121">
    <property type="entry name" value="MutL_C_regsub"/>
</dbReference>
<dbReference type="InterPro" id="IPR037198">
    <property type="entry name" value="MutL_C_sf"/>
</dbReference>
<dbReference type="InterPro" id="IPR020568">
    <property type="entry name" value="Ribosomal_Su5_D2-typ_SF"/>
</dbReference>
<dbReference type="InterPro" id="IPR014721">
    <property type="entry name" value="Ribsml_uS5_D2-typ_fold_subgr"/>
</dbReference>
<dbReference type="NCBIfam" id="TIGR00585">
    <property type="entry name" value="mutl"/>
    <property type="match status" value="1"/>
</dbReference>
<dbReference type="PANTHER" id="PTHR10073">
    <property type="entry name" value="DNA MISMATCH REPAIR PROTEIN MLH, PMS, MUTL"/>
    <property type="match status" value="1"/>
</dbReference>
<dbReference type="PANTHER" id="PTHR10073:SF12">
    <property type="entry name" value="DNA MISMATCH REPAIR PROTEIN MLH1"/>
    <property type="match status" value="1"/>
</dbReference>
<dbReference type="Pfam" id="PF01119">
    <property type="entry name" value="DNA_mis_repair"/>
    <property type="match status" value="1"/>
</dbReference>
<dbReference type="Pfam" id="PF13589">
    <property type="entry name" value="HATPase_c_3"/>
    <property type="match status" value="1"/>
</dbReference>
<dbReference type="Pfam" id="PF08676">
    <property type="entry name" value="MutL_C"/>
    <property type="match status" value="1"/>
</dbReference>
<dbReference type="SMART" id="SM01340">
    <property type="entry name" value="DNA_mis_repair"/>
    <property type="match status" value="1"/>
</dbReference>
<dbReference type="SMART" id="SM00853">
    <property type="entry name" value="MutL_C"/>
    <property type="match status" value="1"/>
</dbReference>
<dbReference type="SUPFAM" id="SSF55874">
    <property type="entry name" value="ATPase domain of HSP90 chaperone/DNA topoisomerase II/histidine kinase"/>
    <property type="match status" value="1"/>
</dbReference>
<dbReference type="SUPFAM" id="SSF118116">
    <property type="entry name" value="DNA mismatch repair protein MutL"/>
    <property type="match status" value="1"/>
</dbReference>
<dbReference type="SUPFAM" id="SSF54211">
    <property type="entry name" value="Ribosomal protein S5 domain 2-like"/>
    <property type="match status" value="1"/>
</dbReference>
<dbReference type="PROSITE" id="PS00058">
    <property type="entry name" value="DNA_MISMATCH_REPAIR_1"/>
    <property type="match status" value="1"/>
</dbReference>
<feature type="chain" id="PRO_1000076702" description="DNA mismatch repair protein MutL">
    <location>
        <begin position="1"/>
        <end position="605"/>
    </location>
</feature>
<gene>
    <name evidence="1" type="primary">mutL</name>
    <name type="ordered locus">PTH_1342</name>
</gene>
<sequence>MANIIILDEFTAGQIAAGEVVERPVSVVKELVENSIDAGAGRIVVELEGGGLQAISVLDDGCGMSEEDLVLAFQRHATSKIKCSDDLNRITTLGFRGEALPSIAAVSKITVATRTRDALAGTRAEFAGGELIGKGPIGCPPGTSITVRDLFYNTPARRKAMKAPSAEGALCGGLISRLALARPEICFEVGIKGRRVFYSPGSGNLIDSLAAVYGRQIAAEMIAVKAVAEGLSINGYLGKPSLSRSTRSHITVIINGRYVRCPAIAEAIEGAYGTLLSRGRRPVAVLSLSVSPELLDVNIHPAKLEVRLLEEEKTASLLAGILKDALADKAVIPSAGNFRQAALRLENNKPGAEIFDGLGAGIIKTPGGGSSDRHVPGDKKNIQECLTLPDAHEYVADRVWVREAEDTPAYGNKVEKLPVLNALAHFPPVYILAGGEDGLYIVDQHAAHERIIYEEILSSGRTRPSQYLLVPVMLELDYREASILIERIIWFTDAGFVIEHFGGNTFLLRGVPFELPAGQEREIILDLLDYFESKGTGAGMTDFFKWAAASIACRSAVRAGEKLSLPSMNALLQRLSGTASPYTCPHGRPVVIKLSFRELELRFRR</sequence>
<keyword id="KW-0227">DNA damage</keyword>
<keyword id="KW-0234">DNA repair</keyword>
<keyword id="KW-1185">Reference proteome</keyword>
<proteinExistence type="inferred from homology"/>
<comment type="function">
    <text evidence="1">This protein is involved in the repair of mismatches in DNA. It is required for dam-dependent methyl-directed DNA mismatch repair. May act as a 'molecular matchmaker', a protein that promotes the formation of a stable complex between two or more DNA-binding proteins in an ATP-dependent manner without itself being part of a final effector complex.</text>
</comment>
<comment type="similarity">
    <text evidence="1">Belongs to the DNA mismatch repair MutL/HexB family.</text>
</comment>
<organism>
    <name type="scientific">Pelotomaculum thermopropionicum (strain DSM 13744 / JCM 10971 / SI)</name>
    <dbReference type="NCBI Taxonomy" id="370438"/>
    <lineage>
        <taxon>Bacteria</taxon>
        <taxon>Bacillati</taxon>
        <taxon>Bacillota</taxon>
        <taxon>Clostridia</taxon>
        <taxon>Eubacteriales</taxon>
        <taxon>Desulfotomaculaceae</taxon>
        <taxon>Pelotomaculum</taxon>
    </lineage>
</organism>